<proteinExistence type="inferred from homology"/>
<protein>
    <recommendedName>
        <fullName evidence="1">Probable 5-dehydro-4-deoxyglucarate dehydratase</fullName>
        <ecNumber evidence="1">4.2.1.41</ecNumber>
    </recommendedName>
    <alternativeName>
        <fullName evidence="1">5-keto-4-deoxy-glucarate dehydratase</fullName>
        <shortName evidence="1">KDGDH</shortName>
    </alternativeName>
</protein>
<accession>B7GX14</accession>
<sequence>MDALELKNIISDGLLSFPVTDFDQNGDFNKSSYAKRLEWLAPYGASALFAAGGTGEFFSLTGNEYSEVIKTAVDTCRGSVPIIAGAGGPTRQAIEQAKEAERLGAHGILLMPHYLTEASQEGLIEHVKQVCNSVDFGVIFYNRSVSRLNLDSIQKLTEMCPNLIGFKDSSGQIDMMTAVTQTMGDRLSYLGGLPTAEVFAAPYKALGCPVYSSAVFNFIPKTAMEFYNALRSDDFETTNRLIKDFFLPLIKIRDRKSGYAVSMIKAGAKIVGHDAGPVRPPLSDLTQADYEDLAALIATLGPQ</sequence>
<reference key="1">
    <citation type="journal article" date="2008" name="J. Bacteriol.">
        <title>Comparative genome sequence analysis of multidrug-resistant Acinetobacter baumannii.</title>
        <authorList>
            <person name="Adams M.D."/>
            <person name="Goglin K."/>
            <person name="Molyneaux N."/>
            <person name="Hujer K.M."/>
            <person name="Lavender H."/>
            <person name="Jamison J.J."/>
            <person name="MacDonald I.J."/>
            <person name="Martin K.M."/>
            <person name="Russo T."/>
            <person name="Campagnari A.A."/>
            <person name="Hujer A.M."/>
            <person name="Bonomo R.A."/>
            <person name="Gill S.R."/>
        </authorList>
    </citation>
    <scope>NUCLEOTIDE SEQUENCE [LARGE SCALE GENOMIC DNA]</scope>
    <source>
        <strain>AB307-0294</strain>
    </source>
</reference>
<dbReference type="EC" id="4.2.1.41" evidence="1"/>
<dbReference type="EMBL" id="CP001172">
    <property type="protein sequence ID" value="ACJ57596.1"/>
    <property type="molecule type" value="Genomic_DNA"/>
</dbReference>
<dbReference type="SMR" id="B7GX14"/>
<dbReference type="HOGENOM" id="CLU_049343_5_2_6"/>
<dbReference type="UniPathway" id="UPA00564">
    <property type="reaction ID" value="UER00628"/>
</dbReference>
<dbReference type="Proteomes" id="UP000006924">
    <property type="component" value="Chromosome"/>
</dbReference>
<dbReference type="GO" id="GO:0008840">
    <property type="term" value="F:4-hydroxy-tetrahydrodipicolinate synthase activity"/>
    <property type="evidence" value="ECO:0007669"/>
    <property type="project" value="TreeGrafter"/>
</dbReference>
<dbReference type="GO" id="GO:0047448">
    <property type="term" value="F:5-dehydro-4-deoxyglucarate dehydratase activity"/>
    <property type="evidence" value="ECO:0007669"/>
    <property type="project" value="UniProtKB-UniRule"/>
</dbReference>
<dbReference type="GO" id="GO:0042838">
    <property type="term" value="P:D-glucarate catabolic process"/>
    <property type="evidence" value="ECO:0007669"/>
    <property type="project" value="UniProtKB-UniRule"/>
</dbReference>
<dbReference type="CDD" id="cd00951">
    <property type="entry name" value="KDGDH"/>
    <property type="match status" value="1"/>
</dbReference>
<dbReference type="Gene3D" id="3.20.20.70">
    <property type="entry name" value="Aldolase class I"/>
    <property type="match status" value="1"/>
</dbReference>
<dbReference type="HAMAP" id="MF_00694">
    <property type="entry name" value="KDGDH"/>
    <property type="match status" value="1"/>
</dbReference>
<dbReference type="InterPro" id="IPR013785">
    <property type="entry name" value="Aldolase_TIM"/>
</dbReference>
<dbReference type="InterPro" id="IPR002220">
    <property type="entry name" value="DapA-like"/>
</dbReference>
<dbReference type="InterPro" id="IPR017655">
    <property type="entry name" value="Dehydro-deoxyglucarate_dehyd"/>
</dbReference>
<dbReference type="NCBIfam" id="TIGR03249">
    <property type="entry name" value="KdgD"/>
    <property type="match status" value="1"/>
</dbReference>
<dbReference type="NCBIfam" id="NF002958">
    <property type="entry name" value="PRK03620.1"/>
    <property type="match status" value="1"/>
</dbReference>
<dbReference type="PANTHER" id="PTHR12128:SF19">
    <property type="entry name" value="5-DEHYDRO-4-DEOXYGLUCARATE DEHYDRATASE 2-RELATED"/>
    <property type="match status" value="1"/>
</dbReference>
<dbReference type="PANTHER" id="PTHR12128">
    <property type="entry name" value="DIHYDRODIPICOLINATE SYNTHASE"/>
    <property type="match status" value="1"/>
</dbReference>
<dbReference type="Pfam" id="PF00701">
    <property type="entry name" value="DHDPS"/>
    <property type="match status" value="1"/>
</dbReference>
<dbReference type="PIRSF" id="PIRSF001365">
    <property type="entry name" value="DHDPS"/>
    <property type="match status" value="1"/>
</dbReference>
<dbReference type="PRINTS" id="PR00146">
    <property type="entry name" value="DHPICSNTHASE"/>
</dbReference>
<dbReference type="SMART" id="SM01130">
    <property type="entry name" value="DHDPS"/>
    <property type="match status" value="1"/>
</dbReference>
<dbReference type="SUPFAM" id="SSF51569">
    <property type="entry name" value="Aldolase"/>
    <property type="match status" value="1"/>
</dbReference>
<organism>
    <name type="scientific">Acinetobacter baumannii (strain AB307-0294)</name>
    <dbReference type="NCBI Taxonomy" id="557600"/>
    <lineage>
        <taxon>Bacteria</taxon>
        <taxon>Pseudomonadati</taxon>
        <taxon>Pseudomonadota</taxon>
        <taxon>Gammaproteobacteria</taxon>
        <taxon>Moraxellales</taxon>
        <taxon>Moraxellaceae</taxon>
        <taxon>Acinetobacter</taxon>
        <taxon>Acinetobacter calcoaceticus/baumannii complex</taxon>
    </lineage>
</organism>
<feature type="chain" id="PRO_1000132264" description="Probable 5-dehydro-4-deoxyglucarate dehydratase">
    <location>
        <begin position="1"/>
        <end position="303"/>
    </location>
</feature>
<name>KDGD_ACIB3</name>
<gene>
    <name type="ordered locus">ABBFA_002443</name>
</gene>
<evidence type="ECO:0000255" key="1">
    <source>
        <dbReference type="HAMAP-Rule" id="MF_00694"/>
    </source>
</evidence>
<keyword id="KW-0456">Lyase</keyword>
<comment type="catalytic activity">
    <reaction evidence="1">
        <text>5-dehydro-4-deoxy-D-glucarate + H(+) = 2,5-dioxopentanoate + CO2 + H2O</text>
        <dbReference type="Rhea" id="RHEA:24608"/>
        <dbReference type="ChEBI" id="CHEBI:15377"/>
        <dbReference type="ChEBI" id="CHEBI:15378"/>
        <dbReference type="ChEBI" id="CHEBI:16526"/>
        <dbReference type="ChEBI" id="CHEBI:42819"/>
        <dbReference type="ChEBI" id="CHEBI:58136"/>
        <dbReference type="EC" id="4.2.1.41"/>
    </reaction>
</comment>
<comment type="pathway">
    <text evidence="1">Carbohydrate acid metabolism; D-glucarate degradation; 2,5-dioxopentanoate from D-glucarate: step 2/2.</text>
</comment>
<comment type="similarity">
    <text evidence="1">Belongs to the DapA family.</text>
</comment>